<organism>
    <name type="scientific">Pseudogaltonia clavata</name>
    <name type="common">Cape hyacinth</name>
    <name type="synonym">Ornithogalum clavatum</name>
    <dbReference type="NCBI Taxonomy" id="81790"/>
    <lineage>
        <taxon>Eukaryota</taxon>
        <taxon>Viridiplantae</taxon>
        <taxon>Streptophyta</taxon>
        <taxon>Embryophyta</taxon>
        <taxon>Tracheophyta</taxon>
        <taxon>Spermatophyta</taxon>
        <taxon>Magnoliopsida</taxon>
        <taxon>Liliopsida</taxon>
        <taxon>Asparagales</taxon>
        <taxon>Hyacinthaceae</taxon>
        <taxon>Ornithogaloideae</taxon>
        <taxon>Pseudogaltonia</taxon>
    </lineage>
</organism>
<reference key="1">
    <citation type="journal article" date="2003" name="J. Plant Res.">
        <title>Phylogenetic relationships among genera of Massonieae (Hyacinthaceae) inferred from plastid DNA and seed morphology.</title>
        <authorList>
            <person name="Pfosser M.F."/>
            <person name="Wetschnig W."/>
            <person name="Ungar S."/>
            <person name="Prenner G."/>
        </authorList>
    </citation>
    <scope>NUCLEOTIDE SEQUENCE [GENOMIC DNA]</scope>
</reference>
<sequence length="495" mass="53370">MRINPTTSGPAVSTLEEKNVGRIAQIIGPVLDVVFPPGKMPNIYNALVVKGRDTVGQQINVTCEVQQLLGNNRVRAVAMSATDGLTRGMEVIDTRAPLSVPVGGATLGRIFNVLGEPVDNLGPVDTRTTSPIHRSAPAFIQLDTELSIFETGIKVVDLLAPYRRGGKIGLFGGAGVGKTVLIMELIYNIAKAHGGVSVFGGVGVRTREGNDLYMEMKESGVINEKNIAESKVALVYGQMNEPPGARMRVGLTALTMAEYFRDVNEQDVLLFIDNIFRFVQAGSEVSALLGRMPSAVGYQPTLSTEMGSLQERITSTKEGSITSIQAVYVPADDLTDPAPATTFAHLDATTVLSRGLAAKGIYPAVDPLGSTSTMLQPRIVGEEHYETAQRVKQTLQRYKELQDIIAILGLDELSEEDRLTVARARKIERFLSQPFFVAEVFTGSPGKYVGLAETIRGFQLILSGELDGLPEQAFYLVGNIDEATAKAMNLEGEKK</sequence>
<keyword id="KW-0066">ATP synthesis</keyword>
<keyword id="KW-0067">ATP-binding</keyword>
<keyword id="KW-0139">CF(1)</keyword>
<keyword id="KW-0150">Chloroplast</keyword>
<keyword id="KW-0375">Hydrogen ion transport</keyword>
<keyword id="KW-0406">Ion transport</keyword>
<keyword id="KW-0472">Membrane</keyword>
<keyword id="KW-0547">Nucleotide-binding</keyword>
<keyword id="KW-0934">Plastid</keyword>
<keyword id="KW-0793">Thylakoid</keyword>
<keyword id="KW-1278">Translocase</keyword>
<keyword id="KW-0813">Transport</keyword>
<feature type="chain" id="PRO_0000254518" description="ATP synthase subunit beta, chloroplastic">
    <location>
        <begin position="1"/>
        <end position="495"/>
    </location>
</feature>
<feature type="binding site" evidence="1">
    <location>
        <begin position="172"/>
        <end position="179"/>
    </location>
    <ligand>
        <name>ATP</name>
        <dbReference type="ChEBI" id="CHEBI:30616"/>
    </ligand>
</feature>
<name>ATPB_PSECV</name>
<geneLocation type="chloroplast"/>
<evidence type="ECO:0000255" key="1">
    <source>
        <dbReference type="HAMAP-Rule" id="MF_01347"/>
    </source>
</evidence>
<gene>
    <name evidence="1" type="primary">atpB</name>
</gene>
<accession>Q85V50</accession>
<dbReference type="EC" id="7.1.2.2" evidence="1"/>
<dbReference type="EMBL" id="AJ508193">
    <property type="protein sequence ID" value="CAD48094.1"/>
    <property type="molecule type" value="Genomic_DNA"/>
</dbReference>
<dbReference type="SMR" id="Q85V50"/>
<dbReference type="GO" id="GO:0009535">
    <property type="term" value="C:chloroplast thylakoid membrane"/>
    <property type="evidence" value="ECO:0007669"/>
    <property type="project" value="UniProtKB-SubCell"/>
</dbReference>
<dbReference type="GO" id="GO:0005739">
    <property type="term" value="C:mitochondrion"/>
    <property type="evidence" value="ECO:0007669"/>
    <property type="project" value="GOC"/>
</dbReference>
<dbReference type="GO" id="GO:0045259">
    <property type="term" value="C:proton-transporting ATP synthase complex"/>
    <property type="evidence" value="ECO:0007669"/>
    <property type="project" value="UniProtKB-KW"/>
</dbReference>
<dbReference type="GO" id="GO:0005524">
    <property type="term" value="F:ATP binding"/>
    <property type="evidence" value="ECO:0007669"/>
    <property type="project" value="UniProtKB-UniRule"/>
</dbReference>
<dbReference type="GO" id="GO:0016887">
    <property type="term" value="F:ATP hydrolysis activity"/>
    <property type="evidence" value="ECO:0007669"/>
    <property type="project" value="InterPro"/>
</dbReference>
<dbReference type="GO" id="GO:0046933">
    <property type="term" value="F:proton-transporting ATP synthase activity, rotational mechanism"/>
    <property type="evidence" value="ECO:0007669"/>
    <property type="project" value="UniProtKB-UniRule"/>
</dbReference>
<dbReference type="GO" id="GO:0042776">
    <property type="term" value="P:proton motive force-driven mitochondrial ATP synthesis"/>
    <property type="evidence" value="ECO:0007669"/>
    <property type="project" value="TreeGrafter"/>
</dbReference>
<dbReference type="CDD" id="cd18110">
    <property type="entry name" value="ATP-synt_F1_beta_C"/>
    <property type="match status" value="1"/>
</dbReference>
<dbReference type="CDD" id="cd18115">
    <property type="entry name" value="ATP-synt_F1_beta_N"/>
    <property type="match status" value="1"/>
</dbReference>
<dbReference type="CDD" id="cd01133">
    <property type="entry name" value="F1-ATPase_beta_CD"/>
    <property type="match status" value="1"/>
</dbReference>
<dbReference type="FunFam" id="1.10.1140.10:FF:000001">
    <property type="entry name" value="ATP synthase subunit beta"/>
    <property type="match status" value="1"/>
</dbReference>
<dbReference type="FunFam" id="3.40.50.12240:FF:000006">
    <property type="entry name" value="ATP synthase subunit beta"/>
    <property type="match status" value="1"/>
</dbReference>
<dbReference type="FunFam" id="3.40.50.300:FF:000004">
    <property type="entry name" value="ATP synthase subunit beta"/>
    <property type="match status" value="1"/>
</dbReference>
<dbReference type="FunFam" id="2.40.10.170:FF:000002">
    <property type="entry name" value="ATP synthase subunit beta, chloroplastic"/>
    <property type="match status" value="1"/>
</dbReference>
<dbReference type="Gene3D" id="2.40.10.170">
    <property type="match status" value="1"/>
</dbReference>
<dbReference type="Gene3D" id="1.10.1140.10">
    <property type="entry name" value="Bovine Mitochondrial F1-atpase, Atp Synthase Beta Chain, Chain D, domain 3"/>
    <property type="match status" value="1"/>
</dbReference>
<dbReference type="Gene3D" id="3.40.50.300">
    <property type="entry name" value="P-loop containing nucleotide triphosphate hydrolases"/>
    <property type="match status" value="1"/>
</dbReference>
<dbReference type="HAMAP" id="MF_01347">
    <property type="entry name" value="ATP_synth_beta_bact"/>
    <property type="match status" value="1"/>
</dbReference>
<dbReference type="InterPro" id="IPR003593">
    <property type="entry name" value="AAA+_ATPase"/>
</dbReference>
<dbReference type="InterPro" id="IPR055190">
    <property type="entry name" value="ATP-synt_VA_C"/>
</dbReference>
<dbReference type="InterPro" id="IPR005722">
    <property type="entry name" value="ATP_synth_F1_bsu"/>
</dbReference>
<dbReference type="InterPro" id="IPR020003">
    <property type="entry name" value="ATPase_a/bsu_AS"/>
</dbReference>
<dbReference type="InterPro" id="IPR050053">
    <property type="entry name" value="ATPase_alpha/beta_chains"/>
</dbReference>
<dbReference type="InterPro" id="IPR004100">
    <property type="entry name" value="ATPase_F1/V1/A1_a/bsu_N"/>
</dbReference>
<dbReference type="InterPro" id="IPR036121">
    <property type="entry name" value="ATPase_F1/V1/A1_a/bsu_N_sf"/>
</dbReference>
<dbReference type="InterPro" id="IPR000194">
    <property type="entry name" value="ATPase_F1/V1/A1_a/bsu_nucl-bd"/>
</dbReference>
<dbReference type="InterPro" id="IPR024034">
    <property type="entry name" value="ATPase_F1/V1_b/a_C"/>
</dbReference>
<dbReference type="InterPro" id="IPR027417">
    <property type="entry name" value="P-loop_NTPase"/>
</dbReference>
<dbReference type="NCBIfam" id="TIGR01039">
    <property type="entry name" value="atpD"/>
    <property type="match status" value="1"/>
</dbReference>
<dbReference type="PANTHER" id="PTHR15184">
    <property type="entry name" value="ATP SYNTHASE"/>
    <property type="match status" value="1"/>
</dbReference>
<dbReference type="PANTHER" id="PTHR15184:SF71">
    <property type="entry name" value="ATP SYNTHASE SUBUNIT BETA, MITOCHONDRIAL"/>
    <property type="match status" value="1"/>
</dbReference>
<dbReference type="Pfam" id="PF00006">
    <property type="entry name" value="ATP-synt_ab"/>
    <property type="match status" value="1"/>
</dbReference>
<dbReference type="Pfam" id="PF02874">
    <property type="entry name" value="ATP-synt_ab_N"/>
    <property type="match status" value="1"/>
</dbReference>
<dbReference type="Pfam" id="PF22919">
    <property type="entry name" value="ATP-synt_VA_C"/>
    <property type="match status" value="1"/>
</dbReference>
<dbReference type="SMART" id="SM00382">
    <property type="entry name" value="AAA"/>
    <property type="match status" value="1"/>
</dbReference>
<dbReference type="SUPFAM" id="SSF47917">
    <property type="entry name" value="C-terminal domain of alpha and beta subunits of F1 ATP synthase"/>
    <property type="match status" value="1"/>
</dbReference>
<dbReference type="SUPFAM" id="SSF50615">
    <property type="entry name" value="N-terminal domain of alpha and beta subunits of F1 ATP synthase"/>
    <property type="match status" value="1"/>
</dbReference>
<dbReference type="SUPFAM" id="SSF52540">
    <property type="entry name" value="P-loop containing nucleoside triphosphate hydrolases"/>
    <property type="match status" value="1"/>
</dbReference>
<dbReference type="PROSITE" id="PS00152">
    <property type="entry name" value="ATPASE_ALPHA_BETA"/>
    <property type="match status" value="1"/>
</dbReference>
<protein>
    <recommendedName>
        <fullName evidence="1">ATP synthase subunit beta, chloroplastic</fullName>
        <ecNumber evidence="1">7.1.2.2</ecNumber>
    </recommendedName>
    <alternativeName>
        <fullName evidence="1">ATP synthase F1 sector subunit beta</fullName>
    </alternativeName>
    <alternativeName>
        <fullName evidence="1">F-ATPase subunit beta</fullName>
    </alternativeName>
</protein>
<comment type="function">
    <text evidence="1">Produces ATP from ADP in the presence of a proton gradient across the membrane. The catalytic sites are hosted primarily by the beta subunits.</text>
</comment>
<comment type="catalytic activity">
    <reaction evidence="1">
        <text>ATP + H2O + 4 H(+)(in) = ADP + phosphate + 5 H(+)(out)</text>
        <dbReference type="Rhea" id="RHEA:57720"/>
        <dbReference type="ChEBI" id="CHEBI:15377"/>
        <dbReference type="ChEBI" id="CHEBI:15378"/>
        <dbReference type="ChEBI" id="CHEBI:30616"/>
        <dbReference type="ChEBI" id="CHEBI:43474"/>
        <dbReference type="ChEBI" id="CHEBI:456216"/>
        <dbReference type="EC" id="7.1.2.2"/>
    </reaction>
</comment>
<comment type="subunit">
    <text evidence="1">F-type ATPases have 2 components, CF(1) - the catalytic core - and CF(0) - the membrane proton channel. CF(1) has five subunits: alpha(3), beta(3), gamma(1), delta(1), epsilon(1). CF(0) has four main subunits: a(1), b(1), b'(1) and c(9-12).</text>
</comment>
<comment type="subcellular location">
    <subcellularLocation>
        <location evidence="1">Plastid</location>
        <location evidence="1">Chloroplast thylakoid membrane</location>
        <topology evidence="1">Peripheral membrane protein</topology>
    </subcellularLocation>
</comment>
<comment type="similarity">
    <text evidence="1">Belongs to the ATPase alpha/beta chains family.</text>
</comment>
<proteinExistence type="inferred from homology"/>